<organismHost>
    <name type="scientific">Erythrocebus patas</name>
    <name type="common">Red guenon</name>
    <name type="synonym">Cercopithecus patas</name>
    <dbReference type="NCBI Taxonomy" id="9538"/>
</organismHost>
<organismHost>
    <name type="scientific">Homo sapiens</name>
    <name type="common">Human</name>
    <dbReference type="NCBI Taxonomy" id="9606"/>
</organismHost>
<organismHost>
    <name type="scientific">Macaca</name>
    <name type="common">macaques</name>
    <dbReference type="NCBI Taxonomy" id="9539"/>
</organismHost>
<organismHost>
    <name type="scientific">Papio hamadryas</name>
    <name type="common">Hamadryas baboon</name>
    <dbReference type="NCBI Taxonomy" id="9557"/>
</organismHost>
<sequence>MSRQHAAYIDYALNRMKKMPIEMLGSDTITLKPYQHFVAKVFLGLDTMHSILLFHDTGVGKTITTVFILKHLKDIYTNWTILLLVKKALVEDPWMNTILKYSPEIIKNCIFINYDDKNFHNKFFTNIKTISSRSRVCVVLDECHNFISKSLIKEDGKQRPTKSVYNYLSKNISLNNNKMICLSATPIVNNVREFTMIVNLLRPKIIQFQSLFENKNLVNEKELIDKLGGICSYIVNDEFSIFDDVEGSQSFAKKTVYMHYVNMTKQQEIIYQKAKIAEIKSGIASFRIYRRMAATFSFDSFPDKKKKTIDEITLELGALYKDFVNYVNKKSFSNNAIKLFKSGKGLTGDSNPLDISLLSELRQKSCKFTEVCLKILASPGKCLVFEPFINQSGIEVLLVYFSVFCITSVEFSSRTKDTRIKNVFEFNKESNTNGEQIKVCVFSISGGEGISFFSINDIFILDMTWNEASLKQIVGRAIRLNSHANTPPNRRYVNVYFIIARLSSGEPTVDEDLINIIKTKSKEFFQLFKVFKESSIEWIYKNKKDFYPINDESGWRALTSRVVDVNVKSKRTVQLAQGQNIWFSNSSRMVTIHKGFKTSDGKIFDVDGNFIQNMPINPIIKIHNDKLVYII</sequence>
<gene>
    <name type="primary">NPH1</name>
    <name type="ordered locus">88L</name>
    <name type="ORF">B5L</name>
</gene>
<feature type="chain" id="PRO_0000099098" description="Nucleoside triphosphatase I">
    <location>
        <begin position="1"/>
        <end position="631"/>
    </location>
</feature>
<feature type="domain" description="Helicase ATP-binding" evidence="2">
    <location>
        <begin position="42"/>
        <end position="204"/>
    </location>
</feature>
<feature type="domain" description="Helicase C-terminal" evidence="3">
    <location>
        <begin position="367"/>
        <end position="536"/>
    </location>
</feature>
<feature type="region of interest" description="Binding to the cap-specific mRNA (nucleoside-2'-O-)-methyltransferase" evidence="1">
    <location>
        <begin position="457"/>
        <end position="524"/>
    </location>
</feature>
<feature type="short sequence motif" description="DEXH box">
    <location>
        <begin position="141"/>
        <end position="144"/>
    </location>
</feature>
<feature type="binding site" evidence="2">
    <location>
        <begin position="55"/>
        <end position="62"/>
    </location>
    <ligand>
        <name>ATP</name>
        <dbReference type="ChEBI" id="CHEBI:30616"/>
    </ligand>
</feature>
<accession>Q9QB93</accession>
<protein>
    <recommendedName>
        <fullName>Nucleoside triphosphatase I</fullName>
        <ecNumber>3.6.1.15</ecNumber>
    </recommendedName>
    <alternativeName>
        <fullName>NPH-I</fullName>
    </alternativeName>
    <alternativeName>
        <fullName>Nucleoside triphosphate phosphohydrolase I</fullName>
        <shortName>NPH I</shortName>
    </alternativeName>
</protein>
<reference key="1">
    <citation type="journal article" date="2003" name="J. Virol.">
        <title>Complete genomic sequence and comparative analysis of the tumorigenic poxvirus Yaba monkey tumor virus.</title>
        <authorList>
            <person name="Brunetti C.R."/>
            <person name="Amano H."/>
            <person name="Ueda Y."/>
            <person name="Qin J."/>
            <person name="Miyamura T."/>
            <person name="Suzuki T."/>
            <person name="Li X."/>
            <person name="Barrett J.W."/>
            <person name="McFadden G."/>
        </authorList>
    </citation>
    <scope>NUCLEOTIDE SEQUENCE [LARGE SCALE GENOMIC DNA]</scope>
</reference>
<keyword id="KW-0067">ATP-binding</keyword>
<keyword id="KW-0238">DNA-binding</keyword>
<keyword id="KW-0378">Hydrolase</keyword>
<keyword id="KW-0547">Nucleotide-binding</keyword>
<keyword id="KW-1185">Reference proteome</keyword>
<keyword id="KW-0804">Transcription</keyword>
<keyword id="KW-0946">Virion</keyword>
<dbReference type="EC" id="3.6.1.15"/>
<dbReference type="EMBL" id="AY386371">
    <property type="protein sequence ID" value="AAR07444.1"/>
    <property type="molecule type" value="Genomic_DNA"/>
</dbReference>
<dbReference type="RefSeq" id="NP_938343.1">
    <property type="nucleotide sequence ID" value="NC_005179.1"/>
</dbReference>
<dbReference type="SMR" id="Q9QB93"/>
<dbReference type="KEGG" id="vg:2943701"/>
<dbReference type="Proteomes" id="UP000008596">
    <property type="component" value="Segment"/>
</dbReference>
<dbReference type="GO" id="GO:0044423">
    <property type="term" value="C:virion component"/>
    <property type="evidence" value="ECO:0007669"/>
    <property type="project" value="UniProtKB-KW"/>
</dbReference>
<dbReference type="GO" id="GO:0005524">
    <property type="term" value="F:ATP binding"/>
    <property type="evidence" value="ECO:0007669"/>
    <property type="project" value="UniProtKB-KW"/>
</dbReference>
<dbReference type="GO" id="GO:0003677">
    <property type="term" value="F:DNA binding"/>
    <property type="evidence" value="ECO:0007669"/>
    <property type="project" value="UniProtKB-KW"/>
</dbReference>
<dbReference type="GO" id="GO:0017111">
    <property type="term" value="F:ribonucleoside triphosphate phosphatase activity"/>
    <property type="evidence" value="ECO:0007669"/>
    <property type="project" value="UniProtKB-EC"/>
</dbReference>
<dbReference type="GO" id="GO:0006351">
    <property type="term" value="P:DNA-templated transcription"/>
    <property type="evidence" value="ECO:0007669"/>
    <property type="project" value="InterPro"/>
</dbReference>
<dbReference type="Gene3D" id="3.40.50.300">
    <property type="entry name" value="P-loop containing nucleotide triphosphate hydrolases"/>
    <property type="match status" value="2"/>
</dbReference>
<dbReference type="InterPro" id="IPR014001">
    <property type="entry name" value="Helicase_ATP-bd"/>
</dbReference>
<dbReference type="InterPro" id="IPR001650">
    <property type="entry name" value="Helicase_C-like"/>
</dbReference>
<dbReference type="InterPro" id="IPR013676">
    <property type="entry name" value="NPHI_C"/>
</dbReference>
<dbReference type="InterPro" id="IPR027417">
    <property type="entry name" value="P-loop_NTPase"/>
</dbReference>
<dbReference type="InterPro" id="IPR000330">
    <property type="entry name" value="SNF2_N"/>
</dbReference>
<dbReference type="PANTHER" id="PTHR10799">
    <property type="entry name" value="SNF2/RAD54 HELICASE FAMILY"/>
    <property type="match status" value="1"/>
</dbReference>
<dbReference type="Pfam" id="PF00271">
    <property type="entry name" value="Helicase_C"/>
    <property type="match status" value="1"/>
</dbReference>
<dbReference type="Pfam" id="PF08469">
    <property type="entry name" value="NPHI_C"/>
    <property type="match status" value="1"/>
</dbReference>
<dbReference type="Pfam" id="PF00176">
    <property type="entry name" value="SNF2-rel_dom"/>
    <property type="match status" value="1"/>
</dbReference>
<dbReference type="SMART" id="SM00487">
    <property type="entry name" value="DEXDc"/>
    <property type="match status" value="1"/>
</dbReference>
<dbReference type="SMART" id="SM00490">
    <property type="entry name" value="HELICc"/>
    <property type="match status" value="1"/>
</dbReference>
<dbReference type="SUPFAM" id="SSF52540">
    <property type="entry name" value="P-loop containing nucleoside triphosphate hydrolases"/>
    <property type="match status" value="2"/>
</dbReference>
<dbReference type="PROSITE" id="PS51192">
    <property type="entry name" value="HELICASE_ATP_BIND_1"/>
    <property type="match status" value="1"/>
</dbReference>
<dbReference type="PROSITE" id="PS51194">
    <property type="entry name" value="HELICASE_CTER"/>
    <property type="match status" value="1"/>
</dbReference>
<organism>
    <name type="scientific">Yaba monkey tumor virus (strain VR587)</name>
    <name type="common">YMTV</name>
    <dbReference type="NCBI Taxonomy" id="928314"/>
    <lineage>
        <taxon>Viruses</taxon>
        <taxon>Varidnaviria</taxon>
        <taxon>Bamfordvirae</taxon>
        <taxon>Nucleocytoviricota</taxon>
        <taxon>Pokkesviricetes</taxon>
        <taxon>Chitovirales</taxon>
        <taxon>Poxviridae</taxon>
        <taxon>Chordopoxvirinae</taxon>
        <taxon>Yatapoxvirus</taxon>
        <taxon>Yaba monkey tumor virus</taxon>
    </lineage>
</organism>
<proteinExistence type="inferred from homology"/>
<evidence type="ECO:0000250" key="1"/>
<evidence type="ECO:0000255" key="2">
    <source>
        <dbReference type="PROSITE-ProRule" id="PRU00541"/>
    </source>
</evidence>
<evidence type="ECO:0000255" key="3">
    <source>
        <dbReference type="PROSITE-ProRule" id="PRU00542"/>
    </source>
</evidence>
<evidence type="ECO:0000305" key="4"/>
<comment type="function">
    <text evidence="1">DNA-dependent ATPase required for providing the needed energy to achieve the termination of early transcripts. Acts in concert with the RAP94 subunit of the virion RNA polymerase and the capping enzyme/VTF to catalyze release of UUUUUNU-containing nascent RNA from the elongation complex. NPH-I must bind ssDNA in order to exhibit ATPase activity (By similarity).</text>
</comment>
<comment type="catalytic activity">
    <reaction>
        <text>a ribonucleoside 5'-triphosphate + H2O = a ribonucleoside 5'-diphosphate + phosphate + H(+)</text>
        <dbReference type="Rhea" id="RHEA:23680"/>
        <dbReference type="ChEBI" id="CHEBI:15377"/>
        <dbReference type="ChEBI" id="CHEBI:15378"/>
        <dbReference type="ChEBI" id="CHEBI:43474"/>
        <dbReference type="ChEBI" id="CHEBI:57930"/>
        <dbReference type="ChEBI" id="CHEBI:61557"/>
        <dbReference type="EC" id="3.6.1.15"/>
    </reaction>
</comment>
<comment type="subunit">
    <text evidence="1">Monomer. Interacts (via C-terminus) with RAP94 (via N-terminus). Interacts with the cap-specific mRNA (nucleoside-2'-O-)-methyltransferase (By similarity).</text>
</comment>
<comment type="subcellular location">
    <subcellularLocation>
        <location evidence="1">Virion</location>
    </subcellularLocation>
    <text evidence="1">Virion core enzyme.</text>
</comment>
<comment type="similarity">
    <text evidence="4">Belongs to the helicase family. NPH I subfamily.</text>
</comment>
<name>NTP1_YMTV5</name>